<keyword id="KW-0472">Membrane</keyword>
<keyword id="KW-0496">Mitochondrion</keyword>
<keyword id="KW-1000">Mitochondrion outer membrane</keyword>
<keyword id="KW-1185">Reference proteome</keyword>
<keyword id="KW-0812">Transmembrane</keyword>
<keyword id="KW-1134">Transmembrane beta strand</keyword>
<feature type="chain" id="PRO_0000384189" description="Mitochondrial distribution and morphology protein 10">
    <location>
        <begin position="1"/>
        <end position="485"/>
    </location>
</feature>
<feature type="region of interest" description="Disordered" evidence="2">
    <location>
        <begin position="126"/>
        <end position="145"/>
    </location>
</feature>
<feature type="region of interest" description="Disordered" evidence="2">
    <location>
        <begin position="384"/>
        <end position="407"/>
    </location>
</feature>
<feature type="region of interest" description="Disordered" evidence="2">
    <location>
        <begin position="450"/>
        <end position="469"/>
    </location>
</feature>
<feature type="compositionally biased region" description="Basic and acidic residues" evidence="2">
    <location>
        <begin position="136"/>
        <end position="145"/>
    </location>
</feature>
<feature type="compositionally biased region" description="Low complexity" evidence="2">
    <location>
        <begin position="450"/>
        <end position="463"/>
    </location>
</feature>
<reference key="1">
    <citation type="journal article" date="2008" name="Nat. Biotechnol.">
        <title>Genome sequencing and analysis of the filamentous fungus Penicillium chrysogenum.</title>
        <authorList>
            <person name="van den Berg M.A."/>
            <person name="Albang R."/>
            <person name="Albermann K."/>
            <person name="Badger J.H."/>
            <person name="Daran J.-M."/>
            <person name="Driessen A.J.M."/>
            <person name="Garcia-Estrada C."/>
            <person name="Fedorova N.D."/>
            <person name="Harris D.M."/>
            <person name="Heijne W.H.M."/>
            <person name="Joardar V.S."/>
            <person name="Kiel J.A.K.W."/>
            <person name="Kovalchuk A."/>
            <person name="Martin J.F."/>
            <person name="Nierman W.C."/>
            <person name="Nijland J.G."/>
            <person name="Pronk J.T."/>
            <person name="Roubos J.A."/>
            <person name="van der Klei I.J."/>
            <person name="van Peij N.N.M.E."/>
            <person name="Veenhuis M."/>
            <person name="von Doehren H."/>
            <person name="Wagner C."/>
            <person name="Wortman J.R."/>
            <person name="Bovenberg R.A.L."/>
        </authorList>
    </citation>
    <scope>NUCLEOTIDE SEQUENCE [LARGE SCALE GENOMIC DNA]</scope>
    <source>
        <strain>ATCC 28089 / DSM 1075 / NRRL 1951 / Wisconsin 54-1255</strain>
    </source>
</reference>
<accession>B6HL48</accession>
<dbReference type="EMBL" id="AM920436">
    <property type="protein sequence ID" value="CAP95236.1"/>
    <property type="molecule type" value="Genomic_DNA"/>
</dbReference>
<dbReference type="RefSeq" id="XP_002567403.1">
    <property type="nucleotide sequence ID" value="XM_002567357.1"/>
</dbReference>
<dbReference type="SMR" id="B6HL48"/>
<dbReference type="STRING" id="500485.B6HL48"/>
<dbReference type="GeneID" id="8313175"/>
<dbReference type="KEGG" id="pcs:N7525_006849"/>
<dbReference type="VEuPathDB" id="FungiDB:PCH_Pc21g03390"/>
<dbReference type="eggNOG" id="ENOG502QUN5">
    <property type="taxonomic scope" value="Eukaryota"/>
</dbReference>
<dbReference type="HOGENOM" id="CLU_026505_1_0_1"/>
<dbReference type="OMA" id="VPGYRQI"/>
<dbReference type="OrthoDB" id="2103793at2759"/>
<dbReference type="BioCyc" id="PCHR:PC21G03390-MONOMER"/>
<dbReference type="Proteomes" id="UP000000724">
    <property type="component" value="Contig Pc00c21"/>
</dbReference>
<dbReference type="GO" id="GO:0032865">
    <property type="term" value="C:ERMES complex"/>
    <property type="evidence" value="ECO:0007669"/>
    <property type="project" value="UniProtKB-UniRule"/>
</dbReference>
<dbReference type="GO" id="GO:0001401">
    <property type="term" value="C:SAM complex"/>
    <property type="evidence" value="ECO:0007669"/>
    <property type="project" value="TreeGrafter"/>
</dbReference>
<dbReference type="GO" id="GO:0051654">
    <property type="term" value="P:establishment of mitochondrion localization"/>
    <property type="evidence" value="ECO:0007669"/>
    <property type="project" value="TreeGrafter"/>
</dbReference>
<dbReference type="GO" id="GO:0000002">
    <property type="term" value="P:mitochondrial genome maintenance"/>
    <property type="evidence" value="ECO:0007669"/>
    <property type="project" value="UniProtKB-UniRule"/>
</dbReference>
<dbReference type="GO" id="GO:0070096">
    <property type="term" value="P:mitochondrial outer membrane translocase complex assembly"/>
    <property type="evidence" value="ECO:0007669"/>
    <property type="project" value="UniProtKB-UniRule"/>
</dbReference>
<dbReference type="GO" id="GO:1990456">
    <property type="term" value="P:mitochondrion-endoplasmic reticulum membrane tethering"/>
    <property type="evidence" value="ECO:0007669"/>
    <property type="project" value="UniProtKB-UniRule"/>
</dbReference>
<dbReference type="GO" id="GO:0015914">
    <property type="term" value="P:phospholipid transport"/>
    <property type="evidence" value="ECO:0007669"/>
    <property type="project" value="TreeGrafter"/>
</dbReference>
<dbReference type="GO" id="GO:0045040">
    <property type="term" value="P:protein insertion into mitochondrial outer membrane"/>
    <property type="evidence" value="ECO:0007669"/>
    <property type="project" value="UniProtKB-UniRule"/>
</dbReference>
<dbReference type="HAMAP" id="MF_03102">
    <property type="entry name" value="Mdm10"/>
    <property type="match status" value="1"/>
</dbReference>
<dbReference type="InterPro" id="IPR027539">
    <property type="entry name" value="Mdm10"/>
</dbReference>
<dbReference type="PANTHER" id="PTHR28035">
    <property type="entry name" value="MITOCHONDRIAL DISTRIBUTION AND MORPHOLOGY PROTEIN 10"/>
    <property type="match status" value="1"/>
</dbReference>
<dbReference type="PANTHER" id="PTHR28035:SF1">
    <property type="entry name" value="MITOCHONDRIAL DISTRIBUTION AND MORPHOLOGY PROTEIN 10"/>
    <property type="match status" value="1"/>
</dbReference>
<dbReference type="Pfam" id="PF12519">
    <property type="entry name" value="MDM10"/>
    <property type="match status" value="1"/>
</dbReference>
<evidence type="ECO:0000255" key="1">
    <source>
        <dbReference type="HAMAP-Rule" id="MF_03102"/>
    </source>
</evidence>
<evidence type="ECO:0000256" key="2">
    <source>
        <dbReference type="SAM" id="MobiDB-lite"/>
    </source>
</evidence>
<comment type="function">
    <text evidence="1">Component of the ERMES/MDM complex, which serves as a molecular tether to connect the endoplasmic reticulum and mitochondria. Components of this complex are involved in the control of mitochondrial shape and protein biogenesis and may function in phospholipid exchange. mdm10 is involved in the late assembly steps of the general translocase of the mitochondrial outer membrane (TOM complex). Functions in the tom40-specific route of the assembly of outer membrane beta-barrel proteins, including the association of tom40 with the receptor tom22 and small TOM proteins. Can associate with the SAM(core) complex as well as the mdm12-mmm1 complex, both involved in late steps of the major beta-barrel assembly pathway, that is responsible for biogenesis of all outer membrane beta-barrel proteins. May act as a switch that shuttles between both complexes and channels precursor proteins into the tom40-specific pathway. Plays a role in mitochondrial morphology and in the inheritance of mitochondria.</text>
</comment>
<comment type="subunit">
    <text evidence="1">Component of the ER-mitochondria encounter structure (ERMES) or MDM complex, composed of mmm1, mdm10, mdm12 and mdm34. Associates with the mitochondrial outer membrane sorting assembly machinery SAM(core) complex.</text>
</comment>
<comment type="subcellular location">
    <subcellularLocation>
        <location evidence="1">Mitochondrion outer membrane</location>
        <topology evidence="1">Multi-pass membrane protein</topology>
    </subcellularLocation>
    <text evidence="1">The ERMES/MDM complex localizes to a few discrete foci (around 10 per single cell), that represent mitochondria-endoplasmic reticulum junctions. These foci are often found next to mtDNA nucleoids.</text>
</comment>
<comment type="domain">
    <text>Lacks alpha-helical transmembrane segments, suggesting that it resides in the membrane via beta-sheet conformations similar to those predicted for other outer membrane proteins and porin.</text>
</comment>
<comment type="similarity">
    <text evidence="1">Belongs to the MDM10 family.</text>
</comment>
<sequence length="485" mass="52397">MLDFMDYIQLSFAEATHWNRDNSYSSLNTTAQSILDFSTPERLRVHLSSLSTPHFATSYTLGTVGLLDGSVSYLFSTVPFDNLPSGSASIPLRKISPGYRQVQAPATPIETWGWDSLLDGVSIPGLTNGSRPEPPIPKDEESIKESEAKRKATLLHASLHLPPPSTLYALFLRRISSNMQLSLAVCSTQGPPQSKSAPQASMLTQLSHDTGKYSNEYLFSTDNALFGWRGLWNFGPDPRYTRDVPPPLSLLSAGAEAYYSPISSLIGMSTGLRFTTLPAATEIPPSSSPSSTRTPISTFPYTLTLTLAPIVGSLSTTYSLRASPNLAFSSRFGFNVYSWESEMVAGCELWRRTKKSDSSSDDDLEWARRKMRMHDFGVSLPGSPASPLLEDPARPEGPVSSNAHTEAETSDSVIKLRIDQSWNVRLLWEGRVKELLVSAGVGLGPGSFSLSPSVSSASGSGSAQSGGGPGMSYWRGVGVSVLYSS</sequence>
<proteinExistence type="inferred from homology"/>
<organism>
    <name type="scientific">Penicillium rubens (strain ATCC 28089 / DSM 1075 / NRRL 1951 / Wisconsin 54-1255)</name>
    <name type="common">Penicillium chrysogenum</name>
    <dbReference type="NCBI Taxonomy" id="500485"/>
    <lineage>
        <taxon>Eukaryota</taxon>
        <taxon>Fungi</taxon>
        <taxon>Dikarya</taxon>
        <taxon>Ascomycota</taxon>
        <taxon>Pezizomycotina</taxon>
        <taxon>Eurotiomycetes</taxon>
        <taxon>Eurotiomycetidae</taxon>
        <taxon>Eurotiales</taxon>
        <taxon>Aspergillaceae</taxon>
        <taxon>Penicillium</taxon>
        <taxon>Penicillium chrysogenum species complex</taxon>
    </lineage>
</organism>
<protein>
    <recommendedName>
        <fullName evidence="1">Mitochondrial distribution and morphology protein 10</fullName>
    </recommendedName>
    <alternativeName>
        <fullName evidence="1">Mitochondrial inheritance component mdm10</fullName>
    </alternativeName>
</protein>
<name>MDM10_PENRW</name>
<gene>
    <name type="primary">mdm10</name>
    <name type="ORF">Pc21g03390</name>
</gene>